<reference key="1">
    <citation type="journal article" date="2005" name="Nature">
        <title>Genomic sequence of the pathogenic and allergenic filamentous fungus Aspergillus fumigatus.</title>
        <authorList>
            <person name="Nierman W.C."/>
            <person name="Pain A."/>
            <person name="Anderson M.J."/>
            <person name="Wortman J.R."/>
            <person name="Kim H.S."/>
            <person name="Arroyo J."/>
            <person name="Berriman M."/>
            <person name="Abe K."/>
            <person name="Archer D.B."/>
            <person name="Bermejo C."/>
            <person name="Bennett J.W."/>
            <person name="Bowyer P."/>
            <person name="Chen D."/>
            <person name="Collins M."/>
            <person name="Coulsen R."/>
            <person name="Davies R."/>
            <person name="Dyer P.S."/>
            <person name="Farman M.L."/>
            <person name="Fedorova N."/>
            <person name="Fedorova N.D."/>
            <person name="Feldblyum T.V."/>
            <person name="Fischer R."/>
            <person name="Fosker N."/>
            <person name="Fraser A."/>
            <person name="Garcia J.L."/>
            <person name="Garcia M.J."/>
            <person name="Goble A."/>
            <person name="Goldman G.H."/>
            <person name="Gomi K."/>
            <person name="Griffith-Jones S."/>
            <person name="Gwilliam R."/>
            <person name="Haas B.J."/>
            <person name="Haas H."/>
            <person name="Harris D.E."/>
            <person name="Horiuchi H."/>
            <person name="Huang J."/>
            <person name="Humphray S."/>
            <person name="Jimenez J."/>
            <person name="Keller N."/>
            <person name="Khouri H."/>
            <person name="Kitamoto K."/>
            <person name="Kobayashi T."/>
            <person name="Konzack S."/>
            <person name="Kulkarni R."/>
            <person name="Kumagai T."/>
            <person name="Lafton A."/>
            <person name="Latge J.-P."/>
            <person name="Li W."/>
            <person name="Lord A."/>
            <person name="Lu C."/>
            <person name="Majoros W.H."/>
            <person name="May G.S."/>
            <person name="Miller B.L."/>
            <person name="Mohamoud Y."/>
            <person name="Molina M."/>
            <person name="Monod M."/>
            <person name="Mouyna I."/>
            <person name="Mulligan S."/>
            <person name="Murphy L.D."/>
            <person name="O'Neil S."/>
            <person name="Paulsen I."/>
            <person name="Penalva M.A."/>
            <person name="Pertea M."/>
            <person name="Price C."/>
            <person name="Pritchard B.L."/>
            <person name="Quail M.A."/>
            <person name="Rabbinowitsch E."/>
            <person name="Rawlins N."/>
            <person name="Rajandream M.A."/>
            <person name="Reichard U."/>
            <person name="Renauld H."/>
            <person name="Robson G.D."/>
            <person name="Rodriguez de Cordoba S."/>
            <person name="Rodriguez-Pena J.M."/>
            <person name="Ronning C.M."/>
            <person name="Rutter S."/>
            <person name="Salzberg S.L."/>
            <person name="Sanchez M."/>
            <person name="Sanchez-Ferrero J.C."/>
            <person name="Saunders D."/>
            <person name="Seeger K."/>
            <person name="Squares R."/>
            <person name="Squares S."/>
            <person name="Takeuchi M."/>
            <person name="Tekaia F."/>
            <person name="Turner G."/>
            <person name="Vazquez de Aldana C.R."/>
            <person name="Weidman J."/>
            <person name="White O."/>
            <person name="Woodward J.R."/>
            <person name="Yu J.-H."/>
            <person name="Fraser C.M."/>
            <person name="Galagan J.E."/>
            <person name="Asai K."/>
            <person name="Machida M."/>
            <person name="Hall N."/>
            <person name="Barrell B.G."/>
            <person name="Denning D.W."/>
        </authorList>
    </citation>
    <scope>NUCLEOTIDE SEQUENCE [LARGE SCALE GENOMIC DNA]</scope>
    <source>
        <strain>ATCC MYA-4609 / CBS 101355 / FGSC A1100 / Af293</strain>
    </source>
</reference>
<reference key="2">
    <citation type="journal article" date="2012" name="PLoS ONE">
        <title>Trypacidin, a spore-borne toxin from Aspergillus fumigatus, is cytotoxic to lung cells.</title>
        <authorList>
            <person name="Gauthier T."/>
            <person name="Wang X."/>
            <person name="Sifuentes Dos Santos J."/>
            <person name="Fysikopoulos A."/>
            <person name="Tadrist S."/>
            <person name="Canlet C."/>
            <person name="Artigot M.P."/>
            <person name="Loiseau N."/>
            <person name="Oswald I.P."/>
            <person name="Puel O."/>
        </authorList>
    </citation>
    <scope>FUNCTION</scope>
    <scope>TISSUE SPECIFICITY</scope>
</reference>
<reference key="3">
    <citation type="journal article" date="2015" name="Appl. Microbiol. Biotechnol.">
        <title>Identification of the antiphagocytic trypacidin gene cluster in the human-pathogenic fungus Aspergillus fumigatus.</title>
        <authorList>
            <person name="Mattern D.J."/>
            <person name="Schoeler H."/>
            <person name="Weber J."/>
            <person name="Novohradska S."/>
            <person name="Kraibooj K."/>
            <person name="Dahse H.M."/>
            <person name="Hillmann F."/>
            <person name="Valiante V."/>
            <person name="Figge M.T."/>
            <person name="Brakhage A.A."/>
        </authorList>
    </citation>
    <scope>FUNCTION</scope>
</reference>
<reference key="4">
    <citation type="journal article" date="2016" name="Environ. Microbiol.">
        <title>Redundant synthesis of a conidial polyketide by two distinct secondary metabolite clusters in Aspergillus fumigatus.</title>
        <authorList>
            <person name="Throckmorton K."/>
            <person name="Lim F.Y."/>
            <person name="Kontoyiannis D.P."/>
            <person name="Zheng W."/>
            <person name="Keller N.P."/>
        </authorList>
    </citation>
    <scope>FUNCTION</scope>
</reference>
<keyword id="KW-0186">Copper</keyword>
<keyword id="KW-0325">Glycoprotein</keyword>
<keyword id="KW-0479">Metal-binding</keyword>
<keyword id="KW-0560">Oxidoreductase</keyword>
<keyword id="KW-1185">Reference proteome</keyword>
<keyword id="KW-0677">Repeat</keyword>
<keyword id="KW-0732">Signal</keyword>
<proteinExistence type="evidence at transcript level"/>
<feature type="signal peptide" evidence="2">
    <location>
        <begin position="1"/>
        <end position="16"/>
    </location>
</feature>
<feature type="chain" id="PRO_5004246590" description="Oxidoreductase tpcJ">
    <location>
        <begin position="17"/>
        <end position="609"/>
    </location>
</feature>
<feature type="domain" description="Plastocyanin-like 1" evidence="2">
    <location>
        <begin position="66"/>
        <end position="186"/>
    </location>
</feature>
<feature type="domain" description="Plastocyanin-like 2" evidence="2">
    <location>
        <begin position="196"/>
        <end position="351"/>
    </location>
</feature>
<feature type="domain" description="Plastocyanin-like 3" evidence="2">
    <location>
        <begin position="429"/>
        <end position="567"/>
    </location>
</feature>
<feature type="glycosylation site" description="N-linked (GlcNAc...) asparagine" evidence="3">
    <location>
        <position position="63"/>
    </location>
</feature>
<feature type="glycosylation site" description="N-linked (GlcNAc...) asparagine" evidence="3">
    <location>
        <position position="107"/>
    </location>
</feature>
<feature type="glycosylation site" description="N-linked (GlcNAc...) asparagine" evidence="3">
    <location>
        <position position="113"/>
    </location>
</feature>
<feature type="glycosylation site" description="N-linked (GlcNAc...) asparagine" evidence="3">
    <location>
        <position position="240"/>
    </location>
</feature>
<feature type="glycosylation site" description="N-linked (GlcNAc...) asparagine" evidence="3">
    <location>
        <position position="283"/>
    </location>
</feature>
<feature type="glycosylation site" description="N-linked (GlcNAc...) asparagine" evidence="3">
    <location>
        <position position="471"/>
    </location>
</feature>
<feature type="glycosylation site" description="N-linked (GlcNAc...) asparagine" evidence="3">
    <location>
        <position position="601"/>
    </location>
</feature>
<protein>
    <recommendedName>
        <fullName evidence="7">Oxidoreductase tpcJ</fullName>
        <ecNumber evidence="11">1.-.-.-</ecNumber>
    </recommendedName>
    <alternativeName>
        <fullName evidence="7">Trypacidin synthesis protein J</fullName>
    </alternativeName>
</protein>
<comment type="function">
    <text evidence="1 4 5 6">Oxidoreductase; part of the gene cluster that mediates the biosynthesis of trypacidin, a mycotoxin with antiprotozoal activity and that plays a role in the infection process (PubMed:26242966, PubMed:26278536). The pathway begins with the synthesis of atrochrysone thioester by the polyketide synthase (PKS) tpcC (PubMed:26242966). The atrochrysone carboxyl ACP thioesterase tpcB then breaks the thioester bond and releases the atrochrysone carboxylic acid from tpcC (PubMed:26242966). The decarboxylase tpcK converts atrochrysone carboxylic acid to atrochrysone which is further reduced into emodin anthrone (PubMed:26242966). The next step is performed by the emodin anthrone oxygenase tpcL that catalyzes the oxidation of emodinanthrone to emodin (PubMed:26242966). Emodin O-methyltransferase encoded by tpcA catalyzes methylation of the 8-hydroxy group of emodin to form questin (PubMed:26242966). Ring cleavage of questin by questin oxidase tpcI leads to desmethylsulochrin via several intermediates including questin epoxide (By similarity). Another methylation step catalyzed by tpcM leads to the formation of sulochrin which is further converted to monomethylsulfochrin by tpcH. Finally, the tpcJ catalyzes the conversion of monomethylsulfochrin to trypacidin (PubMed:26242966). Trypacidin is toxic for human pulmonary and bronchial epithelial cells by initiating the intracellular formation of nitric oxide (NO) and hydrogen peroxide (H(2)O(2)), thus triggering host necrotic cell death (PubMed:22319557). The trypacidin pathway is also able to produce endocrocin via a distinct route from the endocrocin Enc pathway (PubMed:26242966).</text>
</comment>
<comment type="pathway">
    <text evidence="11">Secondary metabolite biosynthesis.</text>
</comment>
<comment type="tissue specificity">
    <text evidence="10">Specifically expressed in conidia (PubMed:22319557).</text>
</comment>
<comment type="similarity">
    <text evidence="9">Belongs to the multicopper oxidase family.</text>
</comment>
<dbReference type="EC" id="1.-.-.-" evidence="11"/>
<dbReference type="EMBL" id="AAHF01000005">
    <property type="protein sequence ID" value="EAL89346.1"/>
    <property type="molecule type" value="Genomic_DNA"/>
</dbReference>
<dbReference type="RefSeq" id="XP_751384.1">
    <property type="nucleotide sequence ID" value="XM_746291.1"/>
</dbReference>
<dbReference type="SMR" id="Q4WQY8"/>
<dbReference type="STRING" id="330879.Q4WQY8"/>
<dbReference type="GlyCosmos" id="Q4WQY8">
    <property type="glycosylation" value="7 sites, No reported glycans"/>
</dbReference>
<dbReference type="EnsemblFungi" id="EAL89346">
    <property type="protein sequence ID" value="EAL89346"/>
    <property type="gene ID" value="AFUA_4G14490"/>
</dbReference>
<dbReference type="GeneID" id="3509608"/>
<dbReference type="KEGG" id="afm:AFUA_4G14490"/>
<dbReference type="VEuPathDB" id="FungiDB:Afu4g14490"/>
<dbReference type="eggNOG" id="KOG1263">
    <property type="taxonomic scope" value="Eukaryota"/>
</dbReference>
<dbReference type="HOGENOM" id="CLU_006504_7_2_1"/>
<dbReference type="InParanoid" id="Q4WQY8"/>
<dbReference type="OMA" id="CKEGIVM"/>
<dbReference type="OrthoDB" id="2121828at2759"/>
<dbReference type="Proteomes" id="UP000002530">
    <property type="component" value="Chromosome 4"/>
</dbReference>
<dbReference type="GO" id="GO:0005507">
    <property type="term" value="F:copper ion binding"/>
    <property type="evidence" value="ECO:0007669"/>
    <property type="project" value="InterPro"/>
</dbReference>
<dbReference type="GO" id="GO:0016491">
    <property type="term" value="F:oxidoreductase activity"/>
    <property type="evidence" value="ECO:0000318"/>
    <property type="project" value="GO_Central"/>
</dbReference>
<dbReference type="GO" id="GO:0044550">
    <property type="term" value="P:secondary metabolite biosynthetic process"/>
    <property type="evidence" value="ECO:0000317"/>
    <property type="project" value="AspGD"/>
</dbReference>
<dbReference type="CDD" id="cd13854">
    <property type="entry name" value="CuRO_1_MaLCC_like"/>
    <property type="match status" value="1"/>
</dbReference>
<dbReference type="CDD" id="cd13880">
    <property type="entry name" value="CuRO_2_MaLCC_like"/>
    <property type="match status" value="1"/>
</dbReference>
<dbReference type="CDD" id="cd13901">
    <property type="entry name" value="CuRO_3_MaLCC_like"/>
    <property type="match status" value="1"/>
</dbReference>
<dbReference type="FunFam" id="2.60.40.420:FF:000021">
    <property type="entry name" value="Extracellular dihydrogeodin oxidase/laccase"/>
    <property type="match status" value="1"/>
</dbReference>
<dbReference type="FunFam" id="2.60.40.420:FF:000127">
    <property type="entry name" value="Extracellular dihydrogeodin oxidase/laccase, putative"/>
    <property type="match status" value="1"/>
</dbReference>
<dbReference type="FunFam" id="2.60.40.420:FF:000128">
    <property type="entry name" value="Extracellular dihydrogeodin oxidase/laccase, putative"/>
    <property type="match status" value="1"/>
</dbReference>
<dbReference type="Gene3D" id="2.60.40.420">
    <property type="entry name" value="Cupredoxins - blue copper proteins"/>
    <property type="match status" value="3"/>
</dbReference>
<dbReference type="InterPro" id="IPR011707">
    <property type="entry name" value="Cu-oxidase-like_N"/>
</dbReference>
<dbReference type="InterPro" id="IPR001117">
    <property type="entry name" value="Cu-oxidase_2nd"/>
</dbReference>
<dbReference type="InterPro" id="IPR011706">
    <property type="entry name" value="Cu-oxidase_C"/>
</dbReference>
<dbReference type="InterPro" id="IPR045087">
    <property type="entry name" value="Cu-oxidase_fam"/>
</dbReference>
<dbReference type="InterPro" id="IPR033138">
    <property type="entry name" value="Cu_oxidase_CS"/>
</dbReference>
<dbReference type="InterPro" id="IPR002355">
    <property type="entry name" value="Cu_oxidase_Cu_BS"/>
</dbReference>
<dbReference type="InterPro" id="IPR008972">
    <property type="entry name" value="Cupredoxin"/>
</dbReference>
<dbReference type="PANTHER" id="PTHR11709">
    <property type="entry name" value="MULTI-COPPER OXIDASE"/>
    <property type="match status" value="1"/>
</dbReference>
<dbReference type="PANTHER" id="PTHR11709:SF71">
    <property type="entry name" value="OXIDOREDUCTASE TPCJ"/>
    <property type="match status" value="1"/>
</dbReference>
<dbReference type="Pfam" id="PF00394">
    <property type="entry name" value="Cu-oxidase"/>
    <property type="match status" value="1"/>
</dbReference>
<dbReference type="Pfam" id="PF07731">
    <property type="entry name" value="Cu-oxidase_2"/>
    <property type="match status" value="1"/>
</dbReference>
<dbReference type="Pfam" id="PF07732">
    <property type="entry name" value="Cu-oxidase_3"/>
    <property type="match status" value="1"/>
</dbReference>
<dbReference type="SUPFAM" id="SSF49503">
    <property type="entry name" value="Cupredoxins"/>
    <property type="match status" value="3"/>
</dbReference>
<dbReference type="PROSITE" id="PS00079">
    <property type="entry name" value="MULTICOPPER_OXIDASE1"/>
    <property type="match status" value="1"/>
</dbReference>
<dbReference type="PROSITE" id="PS00080">
    <property type="entry name" value="MULTICOPPER_OXIDASE2"/>
    <property type="match status" value="1"/>
</dbReference>
<organism>
    <name type="scientific">Aspergillus fumigatus (strain ATCC MYA-4609 / CBS 101355 / FGSC A1100 / Af293)</name>
    <name type="common">Neosartorya fumigata</name>
    <dbReference type="NCBI Taxonomy" id="330879"/>
    <lineage>
        <taxon>Eukaryota</taxon>
        <taxon>Fungi</taxon>
        <taxon>Dikarya</taxon>
        <taxon>Ascomycota</taxon>
        <taxon>Pezizomycotina</taxon>
        <taxon>Eurotiomycetes</taxon>
        <taxon>Eurotiomycetidae</taxon>
        <taxon>Eurotiales</taxon>
        <taxon>Aspergillaceae</taxon>
        <taxon>Aspergillus</taxon>
        <taxon>Aspergillus subgen. Fumigati</taxon>
    </lineage>
</organism>
<sequence>MITVIKWLVSGCCALAAVTTRAPLPKDCRNTPNSRGCWKDGFDILTDYTDPKRAPPGKLVEYNLTVSQQVIAPDGYEKLGMVANGQFPGPTIEADWGDTIRISVYNNFTDNNNGSAIHWHGLRQFENNVQDGVPGVTQCPSKPGETQVYEFRATQYGTSWYHSHFSLQCECPLNGLFGPIVIHGPSSMDWDEDLGPWLLHDWYHDDVFSLLWVGETKNRGAIPESTILNGKGKFDCNHHNDTRCTGTGGEYFEVNFRKGVRYKFTIANTGTLLEYMFWIDGHNLTVIAADFVPIEPYVTDVVNVAMGQRYEIIVEANADFTHGSNFWIYAQYCDEVDLLPHKAVGIVRYDEQDRQDPRTPPLSDQHRDFGCEDPDLDNLVPVVQQSVGRRVNRMEMKDYLRMGQEGYPDPMNFDGDLHKWVLGDVPMFVDWKNPSLKKLAVDEHPDFPPETVPILLDFDTGDWVHFVITNNYTFEKVHFPRNLTPVMHPMHLHGHDFAILAQGRGEFDPSIVPKLDNPPRRDVVNVDTGSYVWIAFQVNNPGAWLLHCHIAFHVSSGLSLQFIEQPKKVKPLMEAAGVLGEFHDRCAKWTEYYDSVNIPDNHTIDDSGI</sequence>
<gene>
    <name evidence="7" type="primary">tpcJ</name>
    <name evidence="8" type="synonym">tynJ</name>
    <name type="ORF">AFUA_4G14490</name>
</gene>
<accession>Q4WQY8</accession>
<evidence type="ECO:0000250" key="1">
    <source>
        <dbReference type="UniProtKB" id="Q0CCX8"/>
    </source>
</evidence>
<evidence type="ECO:0000255" key="2"/>
<evidence type="ECO:0000255" key="3">
    <source>
        <dbReference type="PROSITE-ProRule" id="PRU00498"/>
    </source>
</evidence>
<evidence type="ECO:0000269" key="4">
    <source>
    </source>
</evidence>
<evidence type="ECO:0000269" key="5">
    <source>
    </source>
</evidence>
<evidence type="ECO:0000269" key="6">
    <source>
    </source>
</evidence>
<evidence type="ECO:0000303" key="7">
    <source>
    </source>
</evidence>
<evidence type="ECO:0000303" key="8">
    <source>
    </source>
</evidence>
<evidence type="ECO:0000305" key="9"/>
<evidence type="ECO:0000305" key="10">
    <source>
    </source>
</evidence>
<evidence type="ECO:0000305" key="11">
    <source>
    </source>
</evidence>
<name>TPCJ_ASPFU</name>